<name>HEM6_LEGPL</name>
<protein>
    <recommendedName>
        <fullName evidence="1">Oxygen-dependent coproporphyrinogen-III oxidase</fullName>
        <shortName evidence="1">CPO</shortName>
        <shortName evidence="1">Coprogen oxidase</shortName>
        <shortName evidence="1">Coproporphyrinogenase</shortName>
        <ecNumber evidence="1">1.3.3.3</ecNumber>
    </recommendedName>
</protein>
<comment type="function">
    <text evidence="1">Involved in the heme biosynthesis. Catalyzes the aerobic oxidative decarboxylation of propionate groups of rings A and B of coproporphyrinogen-III to yield the vinyl groups in protoporphyrinogen-IX.</text>
</comment>
<comment type="catalytic activity">
    <reaction evidence="1">
        <text>coproporphyrinogen III + O2 + 2 H(+) = protoporphyrinogen IX + 2 CO2 + 2 H2O</text>
        <dbReference type="Rhea" id="RHEA:18257"/>
        <dbReference type="ChEBI" id="CHEBI:15377"/>
        <dbReference type="ChEBI" id="CHEBI:15378"/>
        <dbReference type="ChEBI" id="CHEBI:15379"/>
        <dbReference type="ChEBI" id="CHEBI:16526"/>
        <dbReference type="ChEBI" id="CHEBI:57307"/>
        <dbReference type="ChEBI" id="CHEBI:57309"/>
        <dbReference type="EC" id="1.3.3.3"/>
    </reaction>
</comment>
<comment type="cofactor">
    <cofactor evidence="1">
        <name>a divalent metal cation</name>
        <dbReference type="ChEBI" id="CHEBI:60240"/>
    </cofactor>
</comment>
<comment type="pathway">
    <text evidence="1">Porphyrin-containing compound metabolism; protoporphyrin-IX biosynthesis; protoporphyrinogen-IX from coproporphyrinogen-III (O2 route): step 1/1.</text>
</comment>
<comment type="subunit">
    <text evidence="1">Homodimer.</text>
</comment>
<comment type="subcellular location">
    <subcellularLocation>
        <location evidence="1">Cytoplasm</location>
    </subcellularLocation>
</comment>
<comment type="similarity">
    <text evidence="1">Belongs to the aerobic coproporphyrinogen-III oxidase family.</text>
</comment>
<sequence length="309" mass="35548">MPISKTLPYNAIEQIKSYLLQLQNTICVSLESIDGQTKFHEDSWQRAAGGGGKTRIMANGNVFEKAGVNFSHVSGEQLPASASAHREELAGRHFSALGVSLVIHPQNPYVPTTHANVRFFVAEKEDSEPVWWFGGGFDLTPYYGFIEDCEHWHQTALNACLPFGETIYPKFKRWCDDYFFIKHRNEARGIGGLFFDDYNEISFDHSFELMRSIGDHFILAYEPIVARRKDIPFGNREKAFQNYRRGRYAEFNLVYDRGTLFGLQSGGRTESILMSLPPIVHWEYNWHPEKGSNEEKLYTDFLPAKDWLK</sequence>
<proteinExistence type="inferred from homology"/>
<dbReference type="EC" id="1.3.3.3" evidence="1"/>
<dbReference type="EMBL" id="CR628337">
    <property type="protein sequence ID" value="CAH15462.1"/>
    <property type="molecule type" value="Genomic_DNA"/>
</dbReference>
<dbReference type="RefSeq" id="WP_011215313.1">
    <property type="nucleotide sequence ID" value="NC_006369.1"/>
</dbReference>
<dbReference type="SMR" id="Q5WX75"/>
<dbReference type="KEGG" id="lpf:lpl1223"/>
<dbReference type="LegioList" id="lpl1223"/>
<dbReference type="HOGENOM" id="CLU_026169_0_1_6"/>
<dbReference type="UniPathway" id="UPA00251">
    <property type="reaction ID" value="UER00322"/>
</dbReference>
<dbReference type="Proteomes" id="UP000002517">
    <property type="component" value="Chromosome"/>
</dbReference>
<dbReference type="GO" id="GO:0005737">
    <property type="term" value="C:cytoplasm"/>
    <property type="evidence" value="ECO:0007669"/>
    <property type="project" value="UniProtKB-SubCell"/>
</dbReference>
<dbReference type="GO" id="GO:0004109">
    <property type="term" value="F:coproporphyrinogen oxidase activity"/>
    <property type="evidence" value="ECO:0007669"/>
    <property type="project" value="UniProtKB-UniRule"/>
</dbReference>
<dbReference type="GO" id="GO:0046872">
    <property type="term" value="F:metal ion binding"/>
    <property type="evidence" value="ECO:0007669"/>
    <property type="project" value="UniProtKB-KW"/>
</dbReference>
<dbReference type="GO" id="GO:0042803">
    <property type="term" value="F:protein homodimerization activity"/>
    <property type="evidence" value="ECO:0000250"/>
    <property type="project" value="UniProtKB"/>
</dbReference>
<dbReference type="GO" id="GO:0006782">
    <property type="term" value="P:protoporphyrinogen IX biosynthetic process"/>
    <property type="evidence" value="ECO:0007669"/>
    <property type="project" value="UniProtKB-UniRule"/>
</dbReference>
<dbReference type="FunFam" id="3.40.1500.10:FF:000001">
    <property type="entry name" value="Oxygen-dependent coproporphyrinogen-III oxidase"/>
    <property type="match status" value="1"/>
</dbReference>
<dbReference type="Gene3D" id="3.40.1500.10">
    <property type="entry name" value="Coproporphyrinogen III oxidase, aerobic"/>
    <property type="match status" value="1"/>
</dbReference>
<dbReference type="HAMAP" id="MF_00333">
    <property type="entry name" value="Coprogen_oxidas"/>
    <property type="match status" value="1"/>
</dbReference>
<dbReference type="InterPro" id="IPR001260">
    <property type="entry name" value="Coprogen_oxidase_aer"/>
</dbReference>
<dbReference type="InterPro" id="IPR036406">
    <property type="entry name" value="Coprogen_oxidase_aer_sf"/>
</dbReference>
<dbReference type="InterPro" id="IPR018375">
    <property type="entry name" value="Coprogen_oxidase_CS"/>
</dbReference>
<dbReference type="NCBIfam" id="NF003727">
    <property type="entry name" value="PRK05330.1"/>
    <property type="match status" value="1"/>
</dbReference>
<dbReference type="PANTHER" id="PTHR10755">
    <property type="entry name" value="COPROPORPHYRINOGEN III OXIDASE, MITOCHONDRIAL"/>
    <property type="match status" value="1"/>
</dbReference>
<dbReference type="PANTHER" id="PTHR10755:SF0">
    <property type="entry name" value="OXYGEN-DEPENDENT COPROPORPHYRINOGEN-III OXIDASE, MITOCHONDRIAL"/>
    <property type="match status" value="1"/>
</dbReference>
<dbReference type="Pfam" id="PF01218">
    <property type="entry name" value="Coprogen_oxidas"/>
    <property type="match status" value="1"/>
</dbReference>
<dbReference type="PIRSF" id="PIRSF000166">
    <property type="entry name" value="Coproporphyri_ox"/>
    <property type="match status" value="1"/>
</dbReference>
<dbReference type="PRINTS" id="PR00073">
    <property type="entry name" value="COPRGNOXDASE"/>
</dbReference>
<dbReference type="SUPFAM" id="SSF102886">
    <property type="entry name" value="Coproporphyrinogen III oxidase"/>
    <property type="match status" value="1"/>
</dbReference>
<dbReference type="PROSITE" id="PS01021">
    <property type="entry name" value="COPROGEN_OXIDASE"/>
    <property type="match status" value="1"/>
</dbReference>
<accession>Q5WX75</accession>
<organism>
    <name type="scientific">Legionella pneumophila (strain Lens)</name>
    <dbReference type="NCBI Taxonomy" id="297245"/>
    <lineage>
        <taxon>Bacteria</taxon>
        <taxon>Pseudomonadati</taxon>
        <taxon>Pseudomonadota</taxon>
        <taxon>Gammaproteobacteria</taxon>
        <taxon>Legionellales</taxon>
        <taxon>Legionellaceae</taxon>
        <taxon>Legionella</taxon>
    </lineage>
</organism>
<keyword id="KW-0963">Cytoplasm</keyword>
<keyword id="KW-0350">Heme biosynthesis</keyword>
<keyword id="KW-0479">Metal-binding</keyword>
<keyword id="KW-0560">Oxidoreductase</keyword>
<keyword id="KW-0627">Porphyrin biosynthesis</keyword>
<evidence type="ECO:0000255" key="1">
    <source>
        <dbReference type="HAMAP-Rule" id="MF_00333"/>
    </source>
</evidence>
<feature type="chain" id="PRO_0000109902" description="Oxygen-dependent coproporphyrinogen-III oxidase">
    <location>
        <begin position="1"/>
        <end position="309"/>
    </location>
</feature>
<feature type="region of interest" description="Important for dimerization" evidence="1">
    <location>
        <begin position="248"/>
        <end position="283"/>
    </location>
</feature>
<feature type="active site" description="Proton donor" evidence="1">
    <location>
        <position position="114"/>
    </location>
</feature>
<feature type="binding site" evidence="1">
    <location>
        <position position="100"/>
    </location>
    <ligand>
        <name>substrate</name>
    </ligand>
</feature>
<feature type="binding site" evidence="1">
    <location>
        <position position="104"/>
    </location>
    <ligand>
        <name>a divalent metal cation</name>
        <dbReference type="ChEBI" id="CHEBI:60240"/>
    </ligand>
</feature>
<feature type="binding site" evidence="1">
    <location>
        <position position="114"/>
    </location>
    <ligand>
        <name>a divalent metal cation</name>
        <dbReference type="ChEBI" id="CHEBI:60240"/>
    </ligand>
</feature>
<feature type="binding site" evidence="1">
    <location>
        <begin position="116"/>
        <end position="118"/>
    </location>
    <ligand>
        <name>substrate</name>
    </ligand>
</feature>
<feature type="binding site" evidence="1">
    <location>
        <position position="153"/>
    </location>
    <ligand>
        <name>a divalent metal cation</name>
        <dbReference type="ChEBI" id="CHEBI:60240"/>
    </ligand>
</feature>
<feature type="binding site" evidence="1">
    <location>
        <position position="183"/>
    </location>
    <ligand>
        <name>a divalent metal cation</name>
        <dbReference type="ChEBI" id="CHEBI:60240"/>
    </ligand>
</feature>
<feature type="binding site" evidence="1">
    <location>
        <begin position="266"/>
        <end position="268"/>
    </location>
    <ligand>
        <name>substrate</name>
    </ligand>
</feature>
<feature type="site" description="Important for dimerization" evidence="1">
    <location>
        <position position="183"/>
    </location>
</feature>
<gene>
    <name evidence="1" type="primary">hemF</name>
    <name type="ordered locus">lpl1223</name>
</gene>
<reference key="1">
    <citation type="journal article" date="2004" name="Nat. Genet.">
        <title>Evidence in the Legionella pneumophila genome for exploitation of host cell functions and high genome plasticity.</title>
        <authorList>
            <person name="Cazalet C."/>
            <person name="Rusniok C."/>
            <person name="Brueggemann H."/>
            <person name="Zidane N."/>
            <person name="Magnier A."/>
            <person name="Ma L."/>
            <person name="Tichit M."/>
            <person name="Jarraud S."/>
            <person name="Bouchier C."/>
            <person name="Vandenesch F."/>
            <person name="Kunst F."/>
            <person name="Etienne J."/>
            <person name="Glaser P."/>
            <person name="Buchrieser C."/>
        </authorList>
    </citation>
    <scope>NUCLEOTIDE SEQUENCE [LARGE SCALE GENOMIC DNA]</scope>
    <source>
        <strain>Lens</strain>
    </source>
</reference>